<protein>
    <recommendedName>
        <fullName>Cytochrome b</fullName>
    </recommendedName>
    <alternativeName>
        <fullName>Complex III subunit 3</fullName>
    </alternativeName>
    <alternativeName>
        <fullName>Complex III subunit III</fullName>
    </alternativeName>
    <alternativeName>
        <fullName>Cytochrome b-c1 complex subunit 3</fullName>
    </alternativeName>
    <alternativeName>
        <fullName>Ubiquinol-cytochrome-c reductase complex cytochrome b subunit</fullName>
    </alternativeName>
</protein>
<name>CYB_ELLTA</name>
<feature type="chain" id="PRO_0000255051" description="Cytochrome b">
    <location>
        <begin position="1"/>
        <end position="380"/>
    </location>
</feature>
<feature type="transmembrane region" description="Helical" evidence="2">
    <location>
        <begin position="33"/>
        <end position="53"/>
    </location>
</feature>
<feature type="transmembrane region" description="Helical" evidence="2">
    <location>
        <begin position="77"/>
        <end position="98"/>
    </location>
</feature>
<feature type="transmembrane region" description="Helical" evidence="2">
    <location>
        <begin position="113"/>
        <end position="133"/>
    </location>
</feature>
<feature type="transmembrane region" description="Helical" evidence="2">
    <location>
        <begin position="178"/>
        <end position="198"/>
    </location>
</feature>
<feature type="transmembrane region" description="Helical" evidence="2">
    <location>
        <begin position="226"/>
        <end position="246"/>
    </location>
</feature>
<feature type="transmembrane region" description="Helical" evidence="2">
    <location>
        <begin position="288"/>
        <end position="308"/>
    </location>
</feature>
<feature type="transmembrane region" description="Helical" evidence="2">
    <location>
        <begin position="320"/>
        <end position="340"/>
    </location>
</feature>
<feature type="transmembrane region" description="Helical" evidence="2">
    <location>
        <begin position="347"/>
        <end position="367"/>
    </location>
</feature>
<feature type="binding site" description="axial binding residue" evidence="2">
    <location>
        <position position="83"/>
    </location>
    <ligand>
        <name>heme b</name>
        <dbReference type="ChEBI" id="CHEBI:60344"/>
        <label>b562</label>
    </ligand>
    <ligandPart>
        <name>Fe</name>
        <dbReference type="ChEBI" id="CHEBI:18248"/>
    </ligandPart>
</feature>
<feature type="binding site" description="axial binding residue" evidence="2">
    <location>
        <position position="97"/>
    </location>
    <ligand>
        <name>heme b</name>
        <dbReference type="ChEBI" id="CHEBI:60344"/>
        <label>b566</label>
    </ligand>
    <ligandPart>
        <name>Fe</name>
        <dbReference type="ChEBI" id="CHEBI:18248"/>
    </ligandPart>
</feature>
<feature type="binding site" description="axial binding residue" evidence="2">
    <location>
        <position position="182"/>
    </location>
    <ligand>
        <name>heme b</name>
        <dbReference type="ChEBI" id="CHEBI:60344"/>
        <label>b562</label>
    </ligand>
    <ligandPart>
        <name>Fe</name>
        <dbReference type="ChEBI" id="CHEBI:18248"/>
    </ligandPart>
</feature>
<feature type="binding site" description="axial binding residue" evidence="2">
    <location>
        <position position="196"/>
    </location>
    <ligand>
        <name>heme b</name>
        <dbReference type="ChEBI" id="CHEBI:60344"/>
        <label>b566</label>
    </ligand>
    <ligandPart>
        <name>Fe</name>
        <dbReference type="ChEBI" id="CHEBI:18248"/>
    </ligandPart>
</feature>
<feature type="binding site" evidence="2">
    <location>
        <position position="201"/>
    </location>
    <ligand>
        <name>a ubiquinone</name>
        <dbReference type="ChEBI" id="CHEBI:16389"/>
    </ligand>
</feature>
<dbReference type="EMBL" id="AF119270">
    <property type="protein sequence ID" value="AAD43888.1"/>
    <property type="molecule type" value="Genomic_DNA"/>
</dbReference>
<dbReference type="SMR" id="Q9XNM5"/>
<dbReference type="GO" id="GO:0005743">
    <property type="term" value="C:mitochondrial inner membrane"/>
    <property type="evidence" value="ECO:0007669"/>
    <property type="project" value="UniProtKB-SubCell"/>
</dbReference>
<dbReference type="GO" id="GO:0045275">
    <property type="term" value="C:respiratory chain complex III"/>
    <property type="evidence" value="ECO:0007669"/>
    <property type="project" value="InterPro"/>
</dbReference>
<dbReference type="GO" id="GO:0046872">
    <property type="term" value="F:metal ion binding"/>
    <property type="evidence" value="ECO:0007669"/>
    <property type="project" value="UniProtKB-KW"/>
</dbReference>
<dbReference type="GO" id="GO:0008121">
    <property type="term" value="F:ubiquinol-cytochrome-c reductase activity"/>
    <property type="evidence" value="ECO:0007669"/>
    <property type="project" value="InterPro"/>
</dbReference>
<dbReference type="GO" id="GO:0006122">
    <property type="term" value="P:mitochondrial electron transport, ubiquinol to cytochrome c"/>
    <property type="evidence" value="ECO:0007669"/>
    <property type="project" value="TreeGrafter"/>
</dbReference>
<dbReference type="CDD" id="cd00290">
    <property type="entry name" value="cytochrome_b_C"/>
    <property type="match status" value="1"/>
</dbReference>
<dbReference type="CDD" id="cd00284">
    <property type="entry name" value="Cytochrome_b_N"/>
    <property type="match status" value="1"/>
</dbReference>
<dbReference type="FunFam" id="1.20.810.10:FF:000002">
    <property type="entry name" value="Cytochrome b"/>
    <property type="match status" value="1"/>
</dbReference>
<dbReference type="Gene3D" id="1.20.810.10">
    <property type="entry name" value="Cytochrome Bc1 Complex, Chain C"/>
    <property type="match status" value="1"/>
</dbReference>
<dbReference type="InterPro" id="IPR005798">
    <property type="entry name" value="Cyt_b/b6_C"/>
</dbReference>
<dbReference type="InterPro" id="IPR036150">
    <property type="entry name" value="Cyt_b/b6_C_sf"/>
</dbReference>
<dbReference type="InterPro" id="IPR005797">
    <property type="entry name" value="Cyt_b/b6_N"/>
</dbReference>
<dbReference type="InterPro" id="IPR027387">
    <property type="entry name" value="Cytb/b6-like_sf"/>
</dbReference>
<dbReference type="InterPro" id="IPR030689">
    <property type="entry name" value="Cytochrome_b"/>
</dbReference>
<dbReference type="InterPro" id="IPR048260">
    <property type="entry name" value="Cytochrome_b_C_euk/bac"/>
</dbReference>
<dbReference type="InterPro" id="IPR048259">
    <property type="entry name" value="Cytochrome_b_N_euk/bac"/>
</dbReference>
<dbReference type="InterPro" id="IPR016174">
    <property type="entry name" value="Di-haem_cyt_TM"/>
</dbReference>
<dbReference type="PANTHER" id="PTHR19271">
    <property type="entry name" value="CYTOCHROME B"/>
    <property type="match status" value="1"/>
</dbReference>
<dbReference type="PANTHER" id="PTHR19271:SF16">
    <property type="entry name" value="CYTOCHROME B"/>
    <property type="match status" value="1"/>
</dbReference>
<dbReference type="Pfam" id="PF00032">
    <property type="entry name" value="Cytochrom_B_C"/>
    <property type="match status" value="1"/>
</dbReference>
<dbReference type="Pfam" id="PF00033">
    <property type="entry name" value="Cytochrome_B"/>
    <property type="match status" value="1"/>
</dbReference>
<dbReference type="PIRSF" id="PIRSF038885">
    <property type="entry name" value="COB"/>
    <property type="match status" value="1"/>
</dbReference>
<dbReference type="SUPFAM" id="SSF81648">
    <property type="entry name" value="a domain/subunit of cytochrome bc1 complex (Ubiquinol-cytochrome c reductase)"/>
    <property type="match status" value="1"/>
</dbReference>
<dbReference type="SUPFAM" id="SSF81342">
    <property type="entry name" value="Transmembrane di-heme cytochromes"/>
    <property type="match status" value="1"/>
</dbReference>
<dbReference type="PROSITE" id="PS51003">
    <property type="entry name" value="CYTB_CTER"/>
    <property type="match status" value="1"/>
</dbReference>
<dbReference type="PROSITE" id="PS51002">
    <property type="entry name" value="CYTB_NTER"/>
    <property type="match status" value="1"/>
</dbReference>
<gene>
    <name type="primary">MT-CYB</name>
    <name type="synonym">COB</name>
    <name type="synonym">CYTB</name>
    <name type="synonym">MTCYB</name>
</gene>
<keyword id="KW-0249">Electron transport</keyword>
<keyword id="KW-0349">Heme</keyword>
<keyword id="KW-0408">Iron</keyword>
<keyword id="KW-0472">Membrane</keyword>
<keyword id="KW-0479">Metal-binding</keyword>
<keyword id="KW-0496">Mitochondrion</keyword>
<keyword id="KW-0999">Mitochondrion inner membrane</keyword>
<keyword id="KW-0679">Respiratory chain</keyword>
<keyword id="KW-0812">Transmembrane</keyword>
<keyword id="KW-1133">Transmembrane helix</keyword>
<keyword id="KW-0813">Transport</keyword>
<keyword id="KW-0830">Ubiquinone</keyword>
<reference key="1">
    <citation type="journal article" date="1999" name="J. Mammal. Evol.">
        <title>MtDNA evidence for repeated pulses of speciation within arvicoline and murid rodents.</title>
        <authorList>
            <person name="Conroy C.J."/>
            <person name="Cook J.A."/>
        </authorList>
    </citation>
    <scope>NUCLEOTIDE SEQUENCE [GENOMIC DNA]</scope>
</reference>
<proteinExistence type="inferred from homology"/>
<geneLocation type="mitochondrion"/>
<sequence>MTIMRKKHPLIKLINHSFIDLPTPSNISSWWNFGSLLGLCLTIQILTGLFLAMHYTSDTSTAFSSVAHICRDVNYGWLIRYLHANGASMFFICLFLHVGRGVYYGSYNMIETWNMGIILLFAVMATAFMGYVLPWGQMSFWGATVITNLLSAIPYIGTTLVEWIWGGFSVDKATLTRFFAFHFILPFIITALVLVHLLFLHETGSNNPTGLNSDADKIPFHPYYTIKDFLGALLLLATLMMLALFFPDALGDPDNFTPANPLNTPPHIKPEWYFLFAYAILRSIPNKLGGVLALILSILVLALMPFLHTSKQRGLTFRPITQTMYWILVADLLILTWIGGQPVEYPFIMIGQVASIAYFTIIVILMPIAGMIENNILDMN</sequence>
<evidence type="ECO:0000250" key="1"/>
<evidence type="ECO:0000250" key="2">
    <source>
        <dbReference type="UniProtKB" id="P00157"/>
    </source>
</evidence>
<evidence type="ECO:0000255" key="3">
    <source>
        <dbReference type="PROSITE-ProRule" id="PRU00967"/>
    </source>
</evidence>
<evidence type="ECO:0000255" key="4">
    <source>
        <dbReference type="PROSITE-ProRule" id="PRU00968"/>
    </source>
</evidence>
<accession>Q9XNM5</accession>
<organism>
    <name type="scientific">Ellobius tancrei</name>
    <name type="common">Zaisan mole vole</name>
    <dbReference type="NCBI Taxonomy" id="98658"/>
    <lineage>
        <taxon>Eukaryota</taxon>
        <taxon>Metazoa</taxon>
        <taxon>Chordata</taxon>
        <taxon>Craniata</taxon>
        <taxon>Vertebrata</taxon>
        <taxon>Euteleostomi</taxon>
        <taxon>Mammalia</taxon>
        <taxon>Eutheria</taxon>
        <taxon>Euarchontoglires</taxon>
        <taxon>Glires</taxon>
        <taxon>Rodentia</taxon>
        <taxon>Myomorpha</taxon>
        <taxon>Muroidea</taxon>
        <taxon>Cricetidae</taxon>
        <taxon>Arvicolinae</taxon>
        <taxon>Ellobius</taxon>
    </lineage>
</organism>
<comment type="function">
    <text evidence="2">Component of the ubiquinol-cytochrome c reductase complex (complex III or cytochrome b-c1 complex) that is part of the mitochondrial respiratory chain. The b-c1 complex mediates electron transfer from ubiquinol to cytochrome c. Contributes to the generation of a proton gradient across the mitochondrial membrane that is then used for ATP synthesis.</text>
</comment>
<comment type="cofactor">
    <cofactor evidence="2">
        <name>heme b</name>
        <dbReference type="ChEBI" id="CHEBI:60344"/>
    </cofactor>
    <text evidence="2">Binds 2 heme b groups non-covalently.</text>
</comment>
<comment type="subunit">
    <text evidence="2">The cytochrome bc1 complex contains 11 subunits: 3 respiratory subunits (MT-CYB, CYC1 and UQCRFS1), 2 core proteins (UQCRC1 and UQCRC2) and 6 low-molecular weight proteins (UQCRH/QCR6, UQCRB/QCR7, UQCRQ/QCR8, UQCR10/QCR9, UQCR11/QCR10 and a cleavage product of UQCRFS1). This cytochrome bc1 complex then forms a dimer.</text>
</comment>
<comment type="subcellular location">
    <subcellularLocation>
        <location evidence="2">Mitochondrion inner membrane</location>
        <topology evidence="2">Multi-pass membrane protein</topology>
    </subcellularLocation>
</comment>
<comment type="miscellaneous">
    <text evidence="1">Heme 1 (or BL or b562) is low-potential and absorbs at about 562 nm, and heme 2 (or BH or b566) is high-potential and absorbs at about 566 nm.</text>
</comment>
<comment type="similarity">
    <text evidence="3 4">Belongs to the cytochrome b family.</text>
</comment>
<comment type="caution">
    <text evidence="2">The full-length protein contains only eight transmembrane helices, not nine as predicted by bioinformatics tools.</text>
</comment>